<feature type="chain" id="PRO_1000134034" description="2,3,4,5-tetrahydropyridine-2,6-dicarboxylate N-succinyltransferase">
    <location>
        <begin position="1"/>
        <end position="275"/>
    </location>
</feature>
<proteinExistence type="inferred from homology"/>
<evidence type="ECO:0000255" key="1">
    <source>
        <dbReference type="HAMAP-Rule" id="MF_00811"/>
    </source>
</evidence>
<dbReference type="EC" id="2.3.1.117" evidence="1"/>
<dbReference type="EMBL" id="CP000868">
    <property type="protein sequence ID" value="ABX14935.1"/>
    <property type="molecule type" value="Genomic_DNA"/>
</dbReference>
<dbReference type="EMBL" id="AP009385">
    <property type="protein sequence ID" value="BAG43917.1"/>
    <property type="molecule type" value="Genomic_DNA"/>
</dbReference>
<dbReference type="RefSeq" id="WP_006402635.1">
    <property type="nucleotide sequence ID" value="NC_010804.1"/>
</dbReference>
<dbReference type="SMR" id="A9AHT0"/>
<dbReference type="STRING" id="395019.BMULJ_02000"/>
<dbReference type="GeneID" id="89570477"/>
<dbReference type="KEGG" id="bmj:BMULJ_02000"/>
<dbReference type="KEGG" id="bmu:Bmul_1247"/>
<dbReference type="eggNOG" id="COG2171">
    <property type="taxonomic scope" value="Bacteria"/>
</dbReference>
<dbReference type="HOGENOM" id="CLU_050859_0_1_4"/>
<dbReference type="UniPathway" id="UPA00034">
    <property type="reaction ID" value="UER00019"/>
</dbReference>
<dbReference type="Proteomes" id="UP000008815">
    <property type="component" value="Chromosome 1"/>
</dbReference>
<dbReference type="GO" id="GO:0005737">
    <property type="term" value="C:cytoplasm"/>
    <property type="evidence" value="ECO:0007669"/>
    <property type="project" value="UniProtKB-SubCell"/>
</dbReference>
<dbReference type="GO" id="GO:0008666">
    <property type="term" value="F:2,3,4,5-tetrahydropyridine-2,6-dicarboxylate N-succinyltransferase activity"/>
    <property type="evidence" value="ECO:0007669"/>
    <property type="project" value="UniProtKB-UniRule"/>
</dbReference>
<dbReference type="GO" id="GO:0016779">
    <property type="term" value="F:nucleotidyltransferase activity"/>
    <property type="evidence" value="ECO:0007669"/>
    <property type="project" value="TreeGrafter"/>
</dbReference>
<dbReference type="GO" id="GO:0019877">
    <property type="term" value="P:diaminopimelate biosynthetic process"/>
    <property type="evidence" value="ECO:0007669"/>
    <property type="project" value="UniProtKB-UniRule"/>
</dbReference>
<dbReference type="GO" id="GO:0009089">
    <property type="term" value="P:lysine biosynthetic process via diaminopimelate"/>
    <property type="evidence" value="ECO:0007669"/>
    <property type="project" value="UniProtKB-UniRule"/>
</dbReference>
<dbReference type="CDD" id="cd03350">
    <property type="entry name" value="LbH_THP_succinylT"/>
    <property type="match status" value="1"/>
</dbReference>
<dbReference type="Gene3D" id="2.160.10.10">
    <property type="entry name" value="Hexapeptide repeat proteins"/>
    <property type="match status" value="1"/>
</dbReference>
<dbReference type="Gene3D" id="1.10.166.10">
    <property type="entry name" value="Tetrahydrodipicolinate-N-succinyltransferase, N-terminal domain"/>
    <property type="match status" value="1"/>
</dbReference>
<dbReference type="HAMAP" id="MF_00811">
    <property type="entry name" value="DapD"/>
    <property type="match status" value="1"/>
</dbReference>
<dbReference type="InterPro" id="IPR005664">
    <property type="entry name" value="DapD_Trfase_Hexpep_rpt_fam"/>
</dbReference>
<dbReference type="InterPro" id="IPR001451">
    <property type="entry name" value="Hexapep"/>
</dbReference>
<dbReference type="InterPro" id="IPR018357">
    <property type="entry name" value="Hexapep_transf_CS"/>
</dbReference>
<dbReference type="InterPro" id="IPR023180">
    <property type="entry name" value="THP_succinylTrfase_dom1"/>
</dbReference>
<dbReference type="InterPro" id="IPR037133">
    <property type="entry name" value="THP_succinylTrfase_N_sf"/>
</dbReference>
<dbReference type="InterPro" id="IPR011004">
    <property type="entry name" value="Trimer_LpxA-like_sf"/>
</dbReference>
<dbReference type="NCBIfam" id="TIGR00965">
    <property type="entry name" value="dapD"/>
    <property type="match status" value="1"/>
</dbReference>
<dbReference type="NCBIfam" id="NF008808">
    <property type="entry name" value="PRK11830.1"/>
    <property type="match status" value="1"/>
</dbReference>
<dbReference type="PANTHER" id="PTHR19136:SF52">
    <property type="entry name" value="2,3,4,5-TETRAHYDROPYRIDINE-2,6-DICARBOXYLATE N-SUCCINYLTRANSFERASE"/>
    <property type="match status" value="1"/>
</dbReference>
<dbReference type="PANTHER" id="PTHR19136">
    <property type="entry name" value="MOLYBDENUM COFACTOR GUANYLYLTRANSFERASE"/>
    <property type="match status" value="1"/>
</dbReference>
<dbReference type="Pfam" id="PF14602">
    <property type="entry name" value="Hexapep_2"/>
    <property type="match status" value="1"/>
</dbReference>
<dbReference type="Pfam" id="PF14805">
    <property type="entry name" value="THDPS_N_2"/>
    <property type="match status" value="1"/>
</dbReference>
<dbReference type="SUPFAM" id="SSF51161">
    <property type="entry name" value="Trimeric LpxA-like enzymes"/>
    <property type="match status" value="1"/>
</dbReference>
<dbReference type="PROSITE" id="PS00101">
    <property type="entry name" value="HEXAPEP_TRANSFERASES"/>
    <property type="match status" value="1"/>
</dbReference>
<reference key="1">
    <citation type="submission" date="2007-10" db="EMBL/GenBank/DDBJ databases">
        <title>Complete sequence of chromosome 1 of Burkholderia multivorans ATCC 17616.</title>
        <authorList>
            <person name="Copeland A."/>
            <person name="Lucas S."/>
            <person name="Lapidus A."/>
            <person name="Barry K."/>
            <person name="Glavina del Rio T."/>
            <person name="Dalin E."/>
            <person name="Tice H."/>
            <person name="Pitluck S."/>
            <person name="Chain P."/>
            <person name="Malfatti S."/>
            <person name="Shin M."/>
            <person name="Vergez L."/>
            <person name="Schmutz J."/>
            <person name="Larimer F."/>
            <person name="Land M."/>
            <person name="Hauser L."/>
            <person name="Kyrpides N."/>
            <person name="Kim E."/>
            <person name="Tiedje J."/>
            <person name="Richardson P."/>
        </authorList>
    </citation>
    <scope>NUCLEOTIDE SEQUENCE [LARGE SCALE GENOMIC DNA]</scope>
    <source>
        <strain>ATCC 17616 / 249</strain>
    </source>
</reference>
<reference key="2">
    <citation type="submission" date="2007-04" db="EMBL/GenBank/DDBJ databases">
        <title>Complete genome sequence of Burkholderia multivorans ATCC 17616.</title>
        <authorList>
            <person name="Ohtsubo Y."/>
            <person name="Yamashita A."/>
            <person name="Kurokawa K."/>
            <person name="Takami H."/>
            <person name="Yuhara S."/>
            <person name="Nishiyama E."/>
            <person name="Endo R."/>
            <person name="Miyazaki R."/>
            <person name="Ono A."/>
            <person name="Yano K."/>
            <person name="Ito M."/>
            <person name="Sota M."/>
            <person name="Yuji N."/>
            <person name="Hattori M."/>
            <person name="Tsuda M."/>
        </authorList>
    </citation>
    <scope>NUCLEOTIDE SEQUENCE [LARGE SCALE GENOMIC DNA]</scope>
    <source>
        <strain>ATCC 17616 / 249</strain>
    </source>
</reference>
<comment type="catalytic activity">
    <reaction evidence="1">
        <text>(S)-2,3,4,5-tetrahydrodipicolinate + succinyl-CoA + H2O = (S)-2-succinylamino-6-oxoheptanedioate + CoA</text>
        <dbReference type="Rhea" id="RHEA:17325"/>
        <dbReference type="ChEBI" id="CHEBI:15377"/>
        <dbReference type="ChEBI" id="CHEBI:15685"/>
        <dbReference type="ChEBI" id="CHEBI:16845"/>
        <dbReference type="ChEBI" id="CHEBI:57287"/>
        <dbReference type="ChEBI" id="CHEBI:57292"/>
        <dbReference type="EC" id="2.3.1.117"/>
    </reaction>
</comment>
<comment type="pathway">
    <text evidence="1">Amino-acid biosynthesis; L-lysine biosynthesis via DAP pathway; LL-2,6-diaminopimelate from (S)-tetrahydrodipicolinate (succinylase route): step 1/3.</text>
</comment>
<comment type="subcellular location">
    <subcellularLocation>
        <location evidence="1">Cytoplasm</location>
    </subcellularLocation>
</comment>
<comment type="similarity">
    <text evidence="1">Belongs to the transferase hexapeptide repeat family.</text>
</comment>
<name>DAPD_BURM1</name>
<gene>
    <name evidence="1" type="primary">dapD</name>
    <name type="ordered locus">Bmul_1247</name>
    <name type="ordered locus">BMULJ_02000</name>
</gene>
<sequence length="275" mass="29521">MSQQLQQIIDNAWENRAELSPKAAPAEVREAVAHAIEQLDKGALRVAEKIDGNWTVHQWLKKAVLLSFRLEDNAPMPAGGYSQFYDKVPSKFANYTAEDFAAGGFRVVPPAIARRGSFIAKNVVLMPSYTNIGAYVDEGTMVDTWATVGSCAQIGKNVHLSGGVGIGGVLEPLQANPVIIEDNCFIGARSEVVEGVIVEENSVISMGVYLGQSTKIYDRETGEISYGRIPAGSVVVAGNLPSKDGSHSLYCAVIVKKVDAKTRAKVGLNELLRGD</sequence>
<accession>A9AHT0</accession>
<keyword id="KW-0012">Acyltransferase</keyword>
<keyword id="KW-0028">Amino-acid biosynthesis</keyword>
<keyword id="KW-0963">Cytoplasm</keyword>
<keyword id="KW-0220">Diaminopimelate biosynthesis</keyword>
<keyword id="KW-0457">Lysine biosynthesis</keyword>
<keyword id="KW-1185">Reference proteome</keyword>
<keyword id="KW-0677">Repeat</keyword>
<keyword id="KW-0808">Transferase</keyword>
<organism>
    <name type="scientific">Burkholderia multivorans (strain ATCC 17616 / 249)</name>
    <dbReference type="NCBI Taxonomy" id="395019"/>
    <lineage>
        <taxon>Bacteria</taxon>
        <taxon>Pseudomonadati</taxon>
        <taxon>Pseudomonadota</taxon>
        <taxon>Betaproteobacteria</taxon>
        <taxon>Burkholderiales</taxon>
        <taxon>Burkholderiaceae</taxon>
        <taxon>Burkholderia</taxon>
        <taxon>Burkholderia cepacia complex</taxon>
    </lineage>
</organism>
<protein>
    <recommendedName>
        <fullName evidence="1">2,3,4,5-tetrahydropyridine-2,6-dicarboxylate N-succinyltransferase</fullName>
        <ecNumber evidence="1">2.3.1.117</ecNumber>
    </recommendedName>
    <alternativeName>
        <fullName evidence="1">Tetrahydrodipicolinate N-succinyltransferase</fullName>
        <shortName evidence="1">THP succinyltransferase</shortName>
        <shortName evidence="1">Tetrahydropicolinate succinylase</shortName>
    </alternativeName>
</protein>